<name>RS5_BORAP</name>
<sequence length="165" mass="17790">MVDVQTQRKQIEKLISLNRVTKVVKGGRRFSFAAFMVVGDGEGHVGWGFGKANDASDAIKKSLTSARKNLRFVSIRKGTLPHEVIGCFKKAKVLIKPATHGTGVIAGGPVRAVMEALGVHDILSKSLGSNNSMNVVKATFKAFDLVLNAEKVAEMRGKTLKTLWG</sequence>
<keyword id="KW-0687">Ribonucleoprotein</keyword>
<keyword id="KW-0689">Ribosomal protein</keyword>
<keyword id="KW-0694">RNA-binding</keyword>
<keyword id="KW-0699">rRNA-binding</keyword>
<organism>
    <name type="scientific">Borreliella afzelii (strain PKo)</name>
    <name type="common">Borrelia afzelii</name>
    <dbReference type="NCBI Taxonomy" id="390236"/>
    <lineage>
        <taxon>Bacteria</taxon>
        <taxon>Pseudomonadati</taxon>
        <taxon>Spirochaetota</taxon>
        <taxon>Spirochaetia</taxon>
        <taxon>Spirochaetales</taxon>
        <taxon>Borreliaceae</taxon>
        <taxon>Borreliella</taxon>
    </lineage>
</organism>
<dbReference type="EMBL" id="CP000395">
    <property type="protein sequence ID" value="ABH01766.1"/>
    <property type="molecule type" value="Genomic_DNA"/>
</dbReference>
<dbReference type="EMBL" id="CP002933">
    <property type="protein sequence ID" value="AEL69719.1"/>
    <property type="molecule type" value="Genomic_DNA"/>
</dbReference>
<dbReference type="RefSeq" id="WP_004789879.1">
    <property type="nucleotide sequence ID" value="NZ_CP160066.1"/>
</dbReference>
<dbReference type="SMR" id="Q0SN12"/>
<dbReference type="STRING" id="29518.BLA32_01785"/>
<dbReference type="GeneID" id="77265342"/>
<dbReference type="KEGG" id="baf:BAPKO_0523"/>
<dbReference type="KEGG" id="bafz:BafPKo_0511"/>
<dbReference type="PATRIC" id="fig|390236.22.peg.492"/>
<dbReference type="eggNOG" id="COG0098">
    <property type="taxonomic scope" value="Bacteria"/>
</dbReference>
<dbReference type="HOGENOM" id="CLU_065898_2_2_12"/>
<dbReference type="OrthoDB" id="9809045at2"/>
<dbReference type="Proteomes" id="UP000005216">
    <property type="component" value="Chromosome"/>
</dbReference>
<dbReference type="GO" id="GO:0015935">
    <property type="term" value="C:small ribosomal subunit"/>
    <property type="evidence" value="ECO:0007669"/>
    <property type="project" value="InterPro"/>
</dbReference>
<dbReference type="GO" id="GO:0019843">
    <property type="term" value="F:rRNA binding"/>
    <property type="evidence" value="ECO:0007669"/>
    <property type="project" value="UniProtKB-UniRule"/>
</dbReference>
<dbReference type="GO" id="GO:0003735">
    <property type="term" value="F:structural constituent of ribosome"/>
    <property type="evidence" value="ECO:0007669"/>
    <property type="project" value="InterPro"/>
</dbReference>
<dbReference type="GO" id="GO:0006412">
    <property type="term" value="P:translation"/>
    <property type="evidence" value="ECO:0007669"/>
    <property type="project" value="UniProtKB-UniRule"/>
</dbReference>
<dbReference type="FunFam" id="3.30.160.20:FF:000001">
    <property type="entry name" value="30S ribosomal protein S5"/>
    <property type="match status" value="1"/>
</dbReference>
<dbReference type="FunFam" id="3.30.230.10:FF:000002">
    <property type="entry name" value="30S ribosomal protein S5"/>
    <property type="match status" value="1"/>
</dbReference>
<dbReference type="Gene3D" id="3.30.160.20">
    <property type="match status" value="1"/>
</dbReference>
<dbReference type="Gene3D" id="3.30.230.10">
    <property type="match status" value="1"/>
</dbReference>
<dbReference type="HAMAP" id="MF_01307_B">
    <property type="entry name" value="Ribosomal_uS5_B"/>
    <property type="match status" value="1"/>
</dbReference>
<dbReference type="InterPro" id="IPR020568">
    <property type="entry name" value="Ribosomal_Su5_D2-typ_SF"/>
</dbReference>
<dbReference type="InterPro" id="IPR000851">
    <property type="entry name" value="Ribosomal_uS5"/>
</dbReference>
<dbReference type="InterPro" id="IPR005712">
    <property type="entry name" value="Ribosomal_uS5_bac-type"/>
</dbReference>
<dbReference type="InterPro" id="IPR005324">
    <property type="entry name" value="Ribosomal_uS5_C"/>
</dbReference>
<dbReference type="InterPro" id="IPR013810">
    <property type="entry name" value="Ribosomal_uS5_N"/>
</dbReference>
<dbReference type="InterPro" id="IPR018192">
    <property type="entry name" value="Ribosomal_uS5_N_CS"/>
</dbReference>
<dbReference type="InterPro" id="IPR014721">
    <property type="entry name" value="Ribsml_uS5_D2-typ_fold_subgr"/>
</dbReference>
<dbReference type="NCBIfam" id="TIGR01021">
    <property type="entry name" value="rpsE_bact"/>
    <property type="match status" value="1"/>
</dbReference>
<dbReference type="PANTHER" id="PTHR48277">
    <property type="entry name" value="MITOCHONDRIAL RIBOSOMAL PROTEIN S5"/>
    <property type="match status" value="1"/>
</dbReference>
<dbReference type="PANTHER" id="PTHR48277:SF1">
    <property type="entry name" value="MITOCHONDRIAL RIBOSOMAL PROTEIN S5"/>
    <property type="match status" value="1"/>
</dbReference>
<dbReference type="Pfam" id="PF00333">
    <property type="entry name" value="Ribosomal_S5"/>
    <property type="match status" value="1"/>
</dbReference>
<dbReference type="Pfam" id="PF03719">
    <property type="entry name" value="Ribosomal_S5_C"/>
    <property type="match status" value="1"/>
</dbReference>
<dbReference type="SUPFAM" id="SSF54768">
    <property type="entry name" value="dsRNA-binding domain-like"/>
    <property type="match status" value="1"/>
</dbReference>
<dbReference type="SUPFAM" id="SSF54211">
    <property type="entry name" value="Ribosomal protein S5 domain 2-like"/>
    <property type="match status" value="1"/>
</dbReference>
<dbReference type="PROSITE" id="PS00585">
    <property type="entry name" value="RIBOSOMAL_S5"/>
    <property type="match status" value="1"/>
</dbReference>
<dbReference type="PROSITE" id="PS50881">
    <property type="entry name" value="S5_DSRBD"/>
    <property type="match status" value="1"/>
</dbReference>
<evidence type="ECO:0000255" key="1">
    <source>
        <dbReference type="HAMAP-Rule" id="MF_01307"/>
    </source>
</evidence>
<evidence type="ECO:0000305" key="2"/>
<protein>
    <recommendedName>
        <fullName evidence="1">Small ribosomal subunit protein uS5</fullName>
    </recommendedName>
    <alternativeName>
        <fullName evidence="2">30S ribosomal protein S5</fullName>
    </alternativeName>
</protein>
<accession>Q0SN12</accession>
<accession>G0ISD8</accession>
<reference key="1">
    <citation type="journal article" date="2006" name="BMC Genomics">
        <title>Comparative genome analysis: selection pressure on the Borrelia vls cassettes is essential for infectivity.</title>
        <authorList>
            <person name="Gloeckner G."/>
            <person name="Schulte-Spechtel U."/>
            <person name="Schilhabel M."/>
            <person name="Felder M."/>
            <person name="Suehnel J."/>
            <person name="Wilske B."/>
            <person name="Platzer M."/>
        </authorList>
    </citation>
    <scope>NUCLEOTIDE SEQUENCE [LARGE SCALE GENOMIC DNA]</scope>
    <source>
        <strain>PKo</strain>
    </source>
</reference>
<reference key="2">
    <citation type="journal article" date="2011" name="J. Bacteriol.">
        <title>Whole-genome sequences of two Borrelia afzelii and two Borrelia garinii Lyme disease agent isolates.</title>
        <authorList>
            <person name="Casjens S.R."/>
            <person name="Mongodin E.F."/>
            <person name="Qiu W.G."/>
            <person name="Dunn J.J."/>
            <person name="Luft B.J."/>
            <person name="Fraser-Liggett C.M."/>
            <person name="Schutzer S.E."/>
        </authorList>
    </citation>
    <scope>NUCLEOTIDE SEQUENCE [LARGE SCALE GENOMIC DNA]</scope>
    <source>
        <strain>PKo</strain>
    </source>
</reference>
<comment type="function">
    <text evidence="1">With S4 and S12 plays an important role in translational accuracy.</text>
</comment>
<comment type="function">
    <text evidence="1">Located at the back of the 30S subunit body where it stabilizes the conformation of the head with respect to the body.</text>
</comment>
<comment type="subunit">
    <text evidence="1">Part of the 30S ribosomal subunit. Contacts proteins S4 and S8.</text>
</comment>
<comment type="domain">
    <text>The N-terminal domain interacts with the head of the 30S subunit; the C-terminal domain interacts with the body and contacts protein S4. The interaction surface between S4 and S5 is involved in control of translational fidelity.</text>
</comment>
<comment type="similarity">
    <text evidence="1">Belongs to the universal ribosomal protein uS5 family.</text>
</comment>
<feature type="chain" id="PRO_0000323079" description="Small ribosomal subunit protein uS5">
    <location>
        <begin position="1"/>
        <end position="165"/>
    </location>
</feature>
<feature type="domain" description="S5 DRBM" evidence="1">
    <location>
        <begin position="10"/>
        <end position="73"/>
    </location>
</feature>
<proteinExistence type="inferred from homology"/>
<gene>
    <name evidence="1" type="primary">rpsE</name>
    <name type="ordered locus">BAPKO_0523</name>
    <name type="ordered locus">BafPKo_0511</name>
</gene>